<organism>
    <name type="scientific">Saccharomyces cerevisiae (strain ATCC 204508 / S288c)</name>
    <name type="common">Baker's yeast</name>
    <dbReference type="NCBI Taxonomy" id="559292"/>
    <lineage>
        <taxon>Eukaryota</taxon>
        <taxon>Fungi</taxon>
        <taxon>Dikarya</taxon>
        <taxon>Ascomycota</taxon>
        <taxon>Saccharomycotina</taxon>
        <taxon>Saccharomycetes</taxon>
        <taxon>Saccharomycetales</taxon>
        <taxon>Saccharomycetaceae</taxon>
        <taxon>Saccharomyces</taxon>
    </lineage>
</organism>
<reference key="1">
    <citation type="journal article" date="1997" name="Yeast">
        <title>The sequence of a 54.7 kb fragment of yeast chromosome XV reveals the presence of two tRNAs and 24 new open reading frames.</title>
        <authorList>
            <person name="Valens M."/>
            <person name="Bohn C."/>
            <person name="Daignan-Fornier B."/>
            <person name="Dang V.-D."/>
            <person name="Bolotin-Fukuhara M."/>
        </authorList>
    </citation>
    <scope>NUCLEOTIDE SEQUENCE [GENOMIC DNA]</scope>
</reference>
<reference key="2">
    <citation type="journal article" date="1997" name="Nature">
        <title>The nucleotide sequence of Saccharomyces cerevisiae chromosome XV.</title>
        <authorList>
            <person name="Dujon B."/>
            <person name="Albermann K."/>
            <person name="Aldea M."/>
            <person name="Alexandraki D."/>
            <person name="Ansorge W."/>
            <person name="Arino J."/>
            <person name="Benes V."/>
            <person name="Bohn C."/>
            <person name="Bolotin-Fukuhara M."/>
            <person name="Bordonne R."/>
            <person name="Boyer J."/>
            <person name="Camasses A."/>
            <person name="Casamayor A."/>
            <person name="Casas C."/>
            <person name="Cheret G."/>
            <person name="Cziepluch C."/>
            <person name="Daignan-Fornier B."/>
            <person name="Dang V.-D."/>
            <person name="de Haan M."/>
            <person name="Delius H."/>
            <person name="Durand P."/>
            <person name="Fairhead C."/>
            <person name="Feldmann H."/>
            <person name="Gaillon L."/>
            <person name="Galisson F."/>
            <person name="Gamo F.-J."/>
            <person name="Gancedo C."/>
            <person name="Goffeau A."/>
            <person name="Goulding S.E."/>
            <person name="Grivell L.A."/>
            <person name="Habbig B."/>
            <person name="Hand N.J."/>
            <person name="Hani J."/>
            <person name="Hattenhorst U."/>
            <person name="Hebling U."/>
            <person name="Hernando Y."/>
            <person name="Herrero E."/>
            <person name="Heumann K."/>
            <person name="Hiesel R."/>
            <person name="Hilger F."/>
            <person name="Hofmann B."/>
            <person name="Hollenberg C.P."/>
            <person name="Hughes B."/>
            <person name="Jauniaux J.-C."/>
            <person name="Kalogeropoulos A."/>
            <person name="Katsoulou C."/>
            <person name="Kordes E."/>
            <person name="Lafuente M.J."/>
            <person name="Landt O."/>
            <person name="Louis E.J."/>
            <person name="Maarse A.C."/>
            <person name="Madania A."/>
            <person name="Mannhaupt G."/>
            <person name="Marck C."/>
            <person name="Martin R.P."/>
            <person name="Mewes H.-W."/>
            <person name="Michaux G."/>
            <person name="Paces V."/>
            <person name="Parle-McDermott A.G."/>
            <person name="Pearson B.M."/>
            <person name="Perrin A."/>
            <person name="Pettersson B."/>
            <person name="Poch O."/>
            <person name="Pohl T.M."/>
            <person name="Poirey R."/>
            <person name="Portetelle D."/>
            <person name="Pujol A."/>
            <person name="Purnelle B."/>
            <person name="Ramezani Rad M."/>
            <person name="Rechmann S."/>
            <person name="Schwager C."/>
            <person name="Schweizer M."/>
            <person name="Sor F."/>
            <person name="Sterky F."/>
            <person name="Tarassov I.A."/>
            <person name="Teodoru C."/>
            <person name="Tettelin H."/>
            <person name="Thierry A."/>
            <person name="Tobiasch E."/>
            <person name="Tzermia M."/>
            <person name="Uhlen M."/>
            <person name="Unseld M."/>
            <person name="Valens M."/>
            <person name="Vandenbol M."/>
            <person name="Vetter I."/>
            <person name="Vlcek C."/>
            <person name="Voet M."/>
            <person name="Volckaert G."/>
            <person name="Voss H."/>
            <person name="Wambutt R."/>
            <person name="Wedler H."/>
            <person name="Wiemann S."/>
            <person name="Winsor B."/>
            <person name="Wolfe K.H."/>
            <person name="Zollner A."/>
            <person name="Zumstein E."/>
            <person name="Kleine K."/>
        </authorList>
    </citation>
    <scope>NUCLEOTIDE SEQUENCE [LARGE SCALE GENOMIC DNA]</scope>
    <source>
        <strain>ATCC 204508 / S288c</strain>
    </source>
</reference>
<reference key="3">
    <citation type="journal article" date="2014" name="G3 (Bethesda)">
        <title>The reference genome sequence of Saccharomyces cerevisiae: Then and now.</title>
        <authorList>
            <person name="Engel S.R."/>
            <person name="Dietrich F.S."/>
            <person name="Fisk D.G."/>
            <person name="Binkley G."/>
            <person name="Balakrishnan R."/>
            <person name="Costanzo M.C."/>
            <person name="Dwight S.S."/>
            <person name="Hitz B.C."/>
            <person name="Karra K."/>
            <person name="Nash R.S."/>
            <person name="Weng S."/>
            <person name="Wong E.D."/>
            <person name="Lloyd P."/>
            <person name="Skrzypek M.S."/>
            <person name="Miyasato S.R."/>
            <person name="Simison M."/>
            <person name="Cherry J.M."/>
        </authorList>
    </citation>
    <scope>GENOME REANNOTATION</scope>
    <source>
        <strain>ATCC 204508 / S288c</strain>
    </source>
</reference>
<reference key="4">
    <citation type="journal article" date="1999" name="EMBO J.">
        <title>Identification of the catalytic domains and their functionally critical arginine residues of two yeast GTPase-activating proteins specific for Ypt/Rab transport GTPases.</title>
        <authorList>
            <person name="Albert S."/>
            <person name="Will E."/>
            <person name="Gallwitz D."/>
        </authorList>
    </citation>
    <scope>FUNCTION</scope>
    <scope>MUTAGENESIS OF ARG-343</scope>
</reference>
<reference key="5">
    <citation type="journal article" date="2000" name="EMBO J.">
        <title>Sequential action of two GTPases to promote vacuole docking and fusion.</title>
        <authorList>
            <person name="Eitzen G."/>
            <person name="Will E."/>
            <person name="Gallwitz D."/>
            <person name="Haas A."/>
            <person name="Wickner W."/>
        </authorList>
    </citation>
    <scope>FUNCTION</scope>
</reference>
<reference key="6">
    <citation type="journal article" date="2001" name="Mol. Biol. Cell">
        <title>Yeast rab GTPase-activating protein Gyp1p localizes to the Golgi apparatus and is a negative regulator of Ypt1p.</title>
        <authorList>
            <person name="Du L.-L."/>
            <person name="Novick P."/>
        </authorList>
    </citation>
    <scope>FUNCTION</scope>
    <scope>SUBCELLULAR LOCATION</scope>
</reference>
<reference key="7">
    <citation type="journal article" date="2003" name="Nature">
        <title>Global analysis of protein expression in yeast.</title>
        <authorList>
            <person name="Ghaemmaghami S."/>
            <person name="Huh W.-K."/>
            <person name="Bower K."/>
            <person name="Howson R.W."/>
            <person name="Belle A."/>
            <person name="Dephoure N."/>
            <person name="O'Shea E.K."/>
            <person name="Weissman J.S."/>
        </authorList>
    </citation>
    <scope>LEVEL OF PROTEIN EXPRESSION [LARGE SCALE ANALYSIS]</scope>
</reference>
<reference key="8">
    <citation type="journal article" date="2008" name="Mol. Cell. Proteomics">
        <title>A multidimensional chromatography technology for in-depth phosphoproteome analysis.</title>
        <authorList>
            <person name="Albuquerque C.P."/>
            <person name="Smolka M.B."/>
            <person name="Payne S.H."/>
            <person name="Bafna V."/>
            <person name="Eng J."/>
            <person name="Zhou H."/>
        </authorList>
    </citation>
    <scope>PHOSPHORYLATION [LARGE SCALE ANALYSIS] AT SER-250</scope>
    <scope>IDENTIFICATION BY MASS SPECTROMETRY [LARGE SCALE ANALYSIS]</scope>
</reference>
<reference key="9">
    <citation type="journal article" date="2009" name="J. Biol. Chem.">
        <title>The major role of the Rab Ypt7p in vacuole fusion is supporting HOPS membrane association.</title>
        <authorList>
            <person name="Hickey C.M."/>
            <person name="Stroupe C."/>
            <person name="Wickner W."/>
        </authorList>
    </citation>
    <scope>FUNCTION</scope>
</reference>
<reference key="10">
    <citation type="journal article" date="2009" name="Science">
        <title>Global analysis of Cdk1 substrate phosphorylation sites provides insights into evolution.</title>
        <authorList>
            <person name="Holt L.J."/>
            <person name="Tuch B.B."/>
            <person name="Villen J."/>
            <person name="Johnson A.D."/>
            <person name="Gygi S.P."/>
            <person name="Morgan D.O."/>
        </authorList>
    </citation>
    <scope>PHOSPHORYLATION [LARGE SCALE ANALYSIS] AT SER-69 AND SER-250</scope>
    <scope>IDENTIFICATION BY MASS SPECTROMETRY [LARGE SCALE ANALYSIS]</scope>
</reference>
<reference key="11">
    <citation type="journal article" date="2000" name="EMBO J.">
        <title>Crystal structure of the GAP domain of Gyp1p: first insights into interaction with Ypt/Rab proteins.</title>
        <authorList>
            <person name="Rak A."/>
            <person name="Fedorov R."/>
            <person name="Alexandrov K."/>
            <person name="Albert S."/>
            <person name="Goody R.S."/>
            <person name="Gallwitz D."/>
            <person name="Scheidig A.J."/>
        </authorList>
    </citation>
    <scope>X-RAY CRYSTALLOGRAPHY (1.9 ANGSTROMS) OF RAB-GAP TBC DOMAIN</scope>
</reference>
<reference key="12">
    <citation type="journal article" date="2006" name="Nature">
        <title>TBC-domain GAPs for Rab GTPases accelerate GTP hydrolysis by a dual-finger mechanism.</title>
        <authorList>
            <person name="Pan X."/>
            <person name="Eathiraj S."/>
            <person name="Munson M."/>
            <person name="Lambright D.G."/>
        </authorList>
    </citation>
    <scope>X-RAY CRYSTALLOGRAPHY (2.26 ANGSTROMS) OF 244-637</scope>
    <scope>FUNCTION</scope>
    <scope>MUTAGENESIS OF GLN-378</scope>
</reference>
<dbReference type="EMBL" id="Z70678">
    <property type="protein sequence ID" value="CAA94555.1"/>
    <property type="molecule type" value="Genomic_DNA"/>
</dbReference>
<dbReference type="EMBL" id="Z74978">
    <property type="protein sequence ID" value="CAA99263.1"/>
    <property type="molecule type" value="Genomic_DNA"/>
</dbReference>
<dbReference type="EMBL" id="BK006948">
    <property type="protein sequence ID" value="DAA10849.1"/>
    <property type="molecule type" value="Genomic_DNA"/>
</dbReference>
<dbReference type="PIR" id="S66953">
    <property type="entry name" value="S66953"/>
</dbReference>
<dbReference type="RefSeq" id="NP_014713.1">
    <property type="nucleotide sequence ID" value="NM_001183489.1"/>
</dbReference>
<dbReference type="PDB" id="1FKM">
    <property type="method" value="X-ray"/>
    <property type="resolution" value="1.90 A"/>
    <property type="chains" value="A=249-637"/>
</dbReference>
<dbReference type="PDB" id="2G77">
    <property type="method" value="X-ray"/>
    <property type="resolution" value="2.26 A"/>
    <property type="chains" value="A=244-637"/>
</dbReference>
<dbReference type="PDBsum" id="1FKM"/>
<dbReference type="PDBsum" id="2G77"/>
<dbReference type="SMR" id="Q08484"/>
<dbReference type="BioGRID" id="34469">
    <property type="interactions" value="534"/>
</dbReference>
<dbReference type="DIP" id="DIP-1258N"/>
<dbReference type="FunCoup" id="Q08484">
    <property type="interactions" value="1235"/>
</dbReference>
<dbReference type="IntAct" id="Q08484">
    <property type="interactions" value="31"/>
</dbReference>
<dbReference type="MINT" id="Q08484"/>
<dbReference type="STRING" id="4932.YOR070C"/>
<dbReference type="GlyGen" id="Q08484">
    <property type="glycosylation" value="2 sites, 1 O-linked glycan (1 site)"/>
</dbReference>
<dbReference type="iPTMnet" id="Q08484"/>
<dbReference type="PaxDb" id="4932-YOR070C"/>
<dbReference type="PeptideAtlas" id="Q08484"/>
<dbReference type="EnsemblFungi" id="YOR070C_mRNA">
    <property type="protein sequence ID" value="YOR070C"/>
    <property type="gene ID" value="YOR070C"/>
</dbReference>
<dbReference type="GeneID" id="854236"/>
<dbReference type="KEGG" id="sce:YOR070C"/>
<dbReference type="AGR" id="SGD:S000005596"/>
<dbReference type="SGD" id="S000005596">
    <property type="gene designation" value="GYP1"/>
</dbReference>
<dbReference type="VEuPathDB" id="FungiDB:YOR070C"/>
<dbReference type="eggNOG" id="KOG1092">
    <property type="taxonomic scope" value="Eukaryota"/>
</dbReference>
<dbReference type="GeneTree" id="ENSGT00940000170594"/>
<dbReference type="HOGENOM" id="CLU_018687_4_1_1"/>
<dbReference type="InParanoid" id="Q08484"/>
<dbReference type="OMA" id="EFHVFVC"/>
<dbReference type="OrthoDB" id="26371at2759"/>
<dbReference type="BioCyc" id="YEAST:G3O-33609-MONOMER"/>
<dbReference type="BioGRID-ORCS" id="854236">
    <property type="hits" value="1 hit in 10 CRISPR screens"/>
</dbReference>
<dbReference type="EvolutionaryTrace" id="Q08484"/>
<dbReference type="PRO" id="PR:Q08484"/>
<dbReference type="Proteomes" id="UP000002311">
    <property type="component" value="Chromosome XV"/>
</dbReference>
<dbReference type="RNAct" id="Q08484">
    <property type="molecule type" value="protein"/>
</dbReference>
<dbReference type="GO" id="GO:0005737">
    <property type="term" value="C:cytoplasm"/>
    <property type="evidence" value="ECO:0000314"/>
    <property type="project" value="SGD"/>
</dbReference>
<dbReference type="GO" id="GO:0005794">
    <property type="term" value="C:Golgi apparatus"/>
    <property type="evidence" value="ECO:0000314"/>
    <property type="project" value="SGD"/>
</dbReference>
<dbReference type="GO" id="GO:0005795">
    <property type="term" value="C:Golgi stack"/>
    <property type="evidence" value="ECO:0007669"/>
    <property type="project" value="UniProtKB-SubCell"/>
</dbReference>
<dbReference type="GO" id="GO:0005739">
    <property type="term" value="C:mitochondrion"/>
    <property type="evidence" value="ECO:0007005"/>
    <property type="project" value="SGD"/>
</dbReference>
<dbReference type="GO" id="GO:0005096">
    <property type="term" value="F:GTPase activator activity"/>
    <property type="evidence" value="ECO:0000314"/>
    <property type="project" value="SGD"/>
</dbReference>
<dbReference type="GO" id="GO:0016192">
    <property type="term" value="P:vesicle-mediated transport"/>
    <property type="evidence" value="ECO:0000314"/>
    <property type="project" value="SGD"/>
</dbReference>
<dbReference type="FunFam" id="1.10.10.750:FF:000022">
    <property type="entry name" value="GTPase-activating protein"/>
    <property type="match status" value="1"/>
</dbReference>
<dbReference type="FunFam" id="1.10.8.270:FF:000004">
    <property type="entry name" value="TBC1 domain family, member 22B"/>
    <property type="match status" value="1"/>
</dbReference>
<dbReference type="Gene3D" id="1.10.8.270">
    <property type="entry name" value="putative rabgap domain of human tbc1 domain family member 14 like domains"/>
    <property type="match status" value="1"/>
</dbReference>
<dbReference type="Gene3D" id="1.10.10.750">
    <property type="entry name" value="Ypt/Rab-GAP domain of gyp1p, domain 1"/>
    <property type="match status" value="1"/>
</dbReference>
<dbReference type="Gene3D" id="1.10.472.80">
    <property type="entry name" value="Ypt/Rab-GAP domain of gyp1p, domain 3"/>
    <property type="match status" value="1"/>
</dbReference>
<dbReference type="InterPro" id="IPR000195">
    <property type="entry name" value="Rab-GAP-TBC_dom"/>
</dbReference>
<dbReference type="InterPro" id="IPR035969">
    <property type="entry name" value="Rab-GAP_TBC_sf"/>
</dbReference>
<dbReference type="PANTHER" id="PTHR22957:SF26">
    <property type="entry name" value="LD44506P"/>
    <property type="match status" value="1"/>
</dbReference>
<dbReference type="PANTHER" id="PTHR22957">
    <property type="entry name" value="TBC1 DOMAIN FAMILY MEMBER GTPASE-ACTIVATING PROTEIN"/>
    <property type="match status" value="1"/>
</dbReference>
<dbReference type="Pfam" id="PF00566">
    <property type="entry name" value="RabGAP-TBC"/>
    <property type="match status" value="1"/>
</dbReference>
<dbReference type="SMART" id="SM00164">
    <property type="entry name" value="TBC"/>
    <property type="match status" value="1"/>
</dbReference>
<dbReference type="SUPFAM" id="SSF47923">
    <property type="entry name" value="Ypt/Rab-GAP domain of gyp1p"/>
    <property type="match status" value="2"/>
</dbReference>
<dbReference type="PROSITE" id="PS50086">
    <property type="entry name" value="TBC_RABGAP"/>
    <property type="match status" value="1"/>
</dbReference>
<proteinExistence type="evidence at protein level"/>
<sequence length="637" mass="73289">MGVRSAAKEMHERDHNSDSSSLVTSLMKSWRISSASSSKKPSLYKMNTTESTSLPSGYASSADRDRRTSDGNFEAMAKQQASTRRTSNSYSPLRYVNPTLSTASNESPRPALLLRQHHQRHHHHQQPRHSSSGSVGNNCSNSTEPNKKGDRYFKDLDEDWSAVIDDYNMPIPILTNGGFGTPVAPTRTLSRKSTSSSINSISNMGTSAVRNSSSSFTYPQLPQLQKEKTNDSKKTQLEIENERDVQELNSIIQRISKFDNILKDKTIINQQDLRQISWNGIPKIHRPVVWKLLIGYLPVNTKRQEGFLQRKRKEYRDSLKHTFSDQHSRDIPTWHQIEIDIPRTNPHIPLYQFKSVQNSLQRILYLWAIRHPASGYVQGINDLVTPFFETFLTEYLPPSQIDDVEIKDPSTYMVDEQITDLEADTFWCLTKLLEQITDNYIHGQPGILRQVKNLSQLVKRIDADLYNHFQNEHVEFIQFAFRWMNCLLMREFQMGTVIRMWDTYLSETSQEVTSSYSMSSNDIKPPVTPTEPRVASFVTPTKDFQSPTTALSNMTPNNAVEDSGKMRQSSLNEFHVFVCAAFLIKWSDQLMEMDFQETITFLQNPPTKDWTETDIEMLLSEAFIWQSLYKDATSHWL</sequence>
<accession>Q08484</accession>
<accession>D6W2D3</accession>
<accession>O00028</accession>
<name>GYP1_YEAST</name>
<gene>
    <name type="primary">GYP1</name>
    <name type="ordered locus">YOR070C</name>
    <name type="ORF">YOR29-21</name>
</gene>
<comment type="function">
    <text evidence="3 4 5 7 8 9">GTPase-activating protein (GAP) that stimulates specifically the intrinsic GTPase activity of Ypt/Rab-type GTPases YPT1 and YPT7 (PubMed:11359917, PubMed:19386605). Functions on the Golgi as a negative regulator of YPT1 (PubMed:11359917). Functions on the vacuole as a negative regulator of YPT7 (PubMed:11118206, PubMed:19386605). It is also active on SEC4 and YPT51 (PubMed:10508155). Provides a catalytic arginine (arginine finger) and glutamine (glutamine finger) in trans to accelerate the GTP hydrolysis rate of the substrate GTPase (Probable) (PubMed:16855591).</text>
</comment>
<comment type="interaction">
    <interactant intactId="EBI-8005">
        <id>Q08484</id>
    </interactant>
    <interactant intactId="EBI-29384">
        <id>P51996</id>
        <label>YPT32</label>
    </interactant>
    <organismsDiffer>false</organismsDiffer>
    <experiments>3</experiments>
</comment>
<comment type="interaction">
    <interactant intactId="EBI-8005">
        <id>Q08484</id>
    </interactant>
    <interactant intactId="EBI-6379521">
        <id>O35963</id>
        <label>Rab33b</label>
    </interactant>
    <organismsDiffer>true</organismsDiffer>
    <experiments>3</experiments>
</comment>
<comment type="subcellular location">
    <subcellularLocation>
        <location evidence="5">Golgi apparatus</location>
        <location evidence="5">Golgi stack</location>
    </subcellularLocation>
</comment>
<comment type="miscellaneous">
    <text evidence="6">Present with 206 molecules/cell in log phase SD medium.</text>
</comment>
<protein>
    <recommendedName>
        <fullName>GTPase-activating protein GYP1</fullName>
    </recommendedName>
    <alternativeName>
        <fullName>GAP for YPT1</fullName>
    </alternativeName>
</protein>
<keyword id="KW-0002">3D-structure</keyword>
<keyword id="KW-0333">Golgi apparatus</keyword>
<keyword id="KW-0343">GTPase activation</keyword>
<keyword id="KW-0597">Phosphoprotein</keyword>
<keyword id="KW-1185">Reference proteome</keyword>
<feature type="chain" id="PRO_0000208010" description="GTPase-activating protein GYP1">
    <location>
        <begin position="1"/>
        <end position="637"/>
    </location>
</feature>
<feature type="domain" description="Rab-GAP TBC" evidence="1">
    <location>
        <begin position="280"/>
        <end position="508"/>
    </location>
</feature>
<feature type="region of interest" description="Disordered" evidence="2">
    <location>
        <begin position="1"/>
        <end position="152"/>
    </location>
</feature>
<feature type="region of interest" description="Disordered" evidence="2">
    <location>
        <begin position="187"/>
        <end position="233"/>
    </location>
</feature>
<feature type="region of interest" description="Disordered" evidence="2">
    <location>
        <begin position="543"/>
        <end position="564"/>
    </location>
</feature>
<feature type="compositionally biased region" description="Basic and acidic residues" evidence="2">
    <location>
        <begin position="1"/>
        <end position="17"/>
    </location>
</feature>
<feature type="compositionally biased region" description="Polar residues" evidence="2">
    <location>
        <begin position="18"/>
        <end position="27"/>
    </location>
</feature>
<feature type="compositionally biased region" description="Low complexity" evidence="2">
    <location>
        <begin position="28"/>
        <end position="45"/>
    </location>
</feature>
<feature type="compositionally biased region" description="Polar residues" evidence="2">
    <location>
        <begin position="46"/>
        <end position="59"/>
    </location>
</feature>
<feature type="compositionally biased region" description="Polar residues" evidence="2">
    <location>
        <begin position="79"/>
        <end position="91"/>
    </location>
</feature>
<feature type="compositionally biased region" description="Polar residues" evidence="2">
    <location>
        <begin position="98"/>
        <end position="107"/>
    </location>
</feature>
<feature type="compositionally biased region" description="Basic residues" evidence="2">
    <location>
        <begin position="115"/>
        <end position="127"/>
    </location>
</feature>
<feature type="compositionally biased region" description="Low complexity" evidence="2">
    <location>
        <begin position="128"/>
        <end position="142"/>
    </location>
</feature>
<feature type="compositionally biased region" description="Low complexity" evidence="2">
    <location>
        <begin position="187"/>
        <end position="207"/>
    </location>
</feature>
<feature type="compositionally biased region" description="Polar residues" evidence="2">
    <location>
        <begin position="208"/>
        <end position="223"/>
    </location>
</feature>
<feature type="site" description="Arginine finger" evidence="7 9">
    <location>
        <position position="343"/>
    </location>
</feature>
<feature type="site" description="Glutamin finger" evidence="7">
    <location>
        <position position="378"/>
    </location>
</feature>
<feature type="modified residue" description="Phosphoserine" evidence="11">
    <location>
        <position position="69"/>
    </location>
</feature>
<feature type="modified residue" description="Phosphoserine" evidence="10 11">
    <location>
        <position position="250"/>
    </location>
</feature>
<feature type="mutagenesis site" description="Completely abolishes catalytic activity." evidence="3 7">
    <original>R</original>
    <variation>A</variation>
    <variation>K</variation>
    <location>
        <position position="343"/>
    </location>
</feature>
<feature type="mutagenesis site" description="Completely abolishes catalytic activity." evidence="7">
    <original>Q</original>
    <variation>A</variation>
    <location>
        <position position="378"/>
    </location>
</feature>
<feature type="helix" evidence="12">
    <location>
        <begin position="251"/>
        <end position="262"/>
    </location>
</feature>
<feature type="helix" evidence="12">
    <location>
        <begin position="270"/>
        <end position="277"/>
    </location>
</feature>
<feature type="helix" evidence="12">
    <location>
        <begin position="283"/>
        <end position="285"/>
    </location>
</feature>
<feature type="helix" evidence="12">
    <location>
        <begin position="286"/>
        <end position="293"/>
    </location>
</feature>
<feature type="helix" evidence="12">
    <location>
        <begin position="301"/>
        <end position="303"/>
    </location>
</feature>
<feature type="helix" evidence="12">
    <location>
        <begin position="304"/>
        <end position="321"/>
    </location>
</feature>
<feature type="strand" evidence="12">
    <location>
        <begin position="323"/>
        <end position="326"/>
    </location>
</feature>
<feature type="helix" evidence="12">
    <location>
        <begin position="330"/>
        <end position="340"/>
    </location>
</feature>
<feature type="helix" evidence="12">
    <location>
        <begin position="341"/>
        <end position="343"/>
    </location>
</feature>
<feature type="helix" evidence="12">
    <location>
        <begin position="349"/>
        <end position="352"/>
    </location>
</feature>
<feature type="helix" evidence="12">
    <location>
        <begin position="354"/>
        <end position="370"/>
    </location>
</feature>
<feature type="turn" evidence="12">
    <location>
        <begin position="372"/>
        <end position="374"/>
    </location>
</feature>
<feature type="helix" evidence="12">
    <location>
        <begin position="380"/>
        <end position="392"/>
    </location>
</feature>
<feature type="helix" evidence="12">
    <location>
        <begin position="393"/>
        <end position="395"/>
    </location>
</feature>
<feature type="helix" evidence="12">
    <location>
        <begin position="398"/>
        <end position="403"/>
    </location>
</feature>
<feature type="turn" evidence="12">
    <location>
        <begin position="404"/>
        <end position="406"/>
    </location>
</feature>
<feature type="helix" evidence="12">
    <location>
        <begin position="409"/>
        <end position="411"/>
    </location>
</feature>
<feature type="helix" evidence="12">
    <location>
        <begin position="415"/>
        <end position="433"/>
    </location>
</feature>
<feature type="helix" evidence="12">
    <location>
        <begin position="434"/>
        <end position="439"/>
    </location>
</feature>
<feature type="helix" evidence="12">
    <location>
        <begin position="445"/>
        <end position="461"/>
    </location>
</feature>
<feature type="helix" evidence="12">
    <location>
        <begin position="463"/>
        <end position="471"/>
    </location>
</feature>
<feature type="helix" evidence="12">
    <location>
        <begin position="477"/>
        <end position="485"/>
    </location>
</feature>
<feature type="turn" evidence="12">
    <location>
        <begin position="486"/>
        <end position="488"/>
    </location>
</feature>
<feature type="helix" evidence="12">
    <location>
        <begin position="489"/>
        <end position="491"/>
    </location>
</feature>
<feature type="helix" evidence="12">
    <location>
        <begin position="494"/>
        <end position="508"/>
    </location>
</feature>
<feature type="helix" evidence="12">
    <location>
        <begin position="571"/>
        <end position="585"/>
    </location>
</feature>
<feature type="helix" evidence="12">
    <location>
        <begin position="587"/>
        <end position="590"/>
    </location>
</feature>
<feature type="helix" evidence="12">
    <location>
        <begin position="595"/>
        <end position="602"/>
    </location>
</feature>
<feature type="helix" evidence="12">
    <location>
        <begin position="612"/>
        <end position="629"/>
    </location>
</feature>
<evidence type="ECO:0000255" key="1">
    <source>
        <dbReference type="PROSITE-ProRule" id="PRU00163"/>
    </source>
</evidence>
<evidence type="ECO:0000256" key="2">
    <source>
        <dbReference type="SAM" id="MobiDB-lite"/>
    </source>
</evidence>
<evidence type="ECO:0000269" key="3">
    <source>
    </source>
</evidence>
<evidence type="ECO:0000269" key="4">
    <source>
    </source>
</evidence>
<evidence type="ECO:0000269" key="5">
    <source>
    </source>
</evidence>
<evidence type="ECO:0000269" key="6">
    <source>
    </source>
</evidence>
<evidence type="ECO:0000269" key="7">
    <source>
    </source>
</evidence>
<evidence type="ECO:0000269" key="8">
    <source>
    </source>
</evidence>
<evidence type="ECO:0000305" key="9">
    <source>
    </source>
</evidence>
<evidence type="ECO:0007744" key="10">
    <source>
    </source>
</evidence>
<evidence type="ECO:0007744" key="11">
    <source>
    </source>
</evidence>
<evidence type="ECO:0007829" key="12">
    <source>
        <dbReference type="PDB" id="1FKM"/>
    </source>
</evidence>